<protein>
    <recommendedName>
        <fullName evidence="4">Norbelladine 4'-O-methyltransferase 2</fullName>
        <shortName evidence="4">NpN4OMT2</shortName>
        <ecNumber evidence="1">2.1.1.336</ecNumber>
    </recommendedName>
</protein>
<feature type="chain" id="PRO_0000450642" description="Norbelladine 4'-O-methyltransferase 2">
    <location>
        <begin position="1"/>
        <end position="239"/>
    </location>
</feature>
<feature type="binding site" evidence="3">
    <location>
        <position position="55"/>
    </location>
    <ligand>
        <name>S-adenosyl-L-methionine</name>
        <dbReference type="ChEBI" id="CHEBI:59789"/>
    </ligand>
</feature>
<feature type="binding site" evidence="3">
    <location>
        <position position="77"/>
    </location>
    <ligand>
        <name>S-adenosyl-L-methionine</name>
        <dbReference type="ChEBI" id="CHEBI:59789"/>
    </ligand>
</feature>
<feature type="binding site" evidence="3">
    <location>
        <begin position="79"/>
        <end position="80"/>
    </location>
    <ligand>
        <name>S-adenosyl-L-methionine</name>
        <dbReference type="ChEBI" id="CHEBI:59789"/>
    </ligand>
</feature>
<feature type="binding site" evidence="3">
    <location>
        <position position="85"/>
    </location>
    <ligand>
        <name>S-adenosyl-L-methionine</name>
        <dbReference type="ChEBI" id="CHEBI:59789"/>
    </ligand>
</feature>
<feature type="binding site" evidence="3">
    <location>
        <position position="103"/>
    </location>
    <ligand>
        <name>S-adenosyl-L-methionine</name>
        <dbReference type="ChEBI" id="CHEBI:59789"/>
    </ligand>
</feature>
<feature type="binding site" evidence="3">
    <location>
        <position position="132"/>
    </location>
    <ligand>
        <name>S-adenosyl-L-methionine</name>
        <dbReference type="ChEBI" id="CHEBI:59789"/>
    </ligand>
</feature>
<feature type="binding site" evidence="3">
    <location>
        <position position="155"/>
    </location>
    <ligand>
        <name>a divalent metal cation</name>
        <dbReference type="ChEBI" id="CHEBI:60240"/>
    </ligand>
</feature>
<feature type="binding site" evidence="3">
    <location>
        <position position="157"/>
    </location>
    <ligand>
        <name>S-adenosyl-L-methionine</name>
        <dbReference type="ChEBI" id="CHEBI:59789"/>
    </ligand>
</feature>
<feature type="binding site" evidence="3">
    <location>
        <position position="181"/>
    </location>
    <ligand>
        <name>a divalent metal cation</name>
        <dbReference type="ChEBI" id="CHEBI:60240"/>
    </ligand>
</feature>
<feature type="binding site" evidence="3">
    <location>
        <position position="182"/>
    </location>
    <ligand>
        <name>a divalent metal cation</name>
        <dbReference type="ChEBI" id="CHEBI:60240"/>
    </ligand>
</feature>
<comment type="function">
    <text evidence="1 2">4'-O-methyltransferase converting norbelladine to 4'-O-methylnorbelladine (By similarity). 4'-O-methylnorbelladine is a precursor to all Amaryllidaceae alkaloids such as galanthamine, lycorine and haemanthamine, and including haemanthamine- and crinamine-type alkaloids, promising anticancer agents (By similarity).</text>
</comment>
<comment type="catalytic activity">
    <reaction evidence="1">
        <text>norbelladine + S-adenosyl-L-methionine = 4'-O-methylnorbelladine + S-adenosyl-L-homocysteine + H(+)</text>
        <dbReference type="Rhea" id="RHEA:51268"/>
        <dbReference type="ChEBI" id="CHEBI:15378"/>
        <dbReference type="ChEBI" id="CHEBI:57856"/>
        <dbReference type="ChEBI" id="CHEBI:59789"/>
        <dbReference type="ChEBI" id="CHEBI:133993"/>
        <dbReference type="ChEBI" id="CHEBI:134001"/>
        <dbReference type="EC" id="2.1.1.336"/>
    </reaction>
</comment>
<comment type="cofactor">
    <cofactor evidence="1">
        <name>Mg(2+)</name>
        <dbReference type="ChEBI" id="CHEBI:18420"/>
    </cofactor>
</comment>
<comment type="pathway">
    <text evidence="1">Alkaloid biosynthesis.</text>
</comment>
<comment type="similarity">
    <text evidence="5">Belongs to the class I-like SAM-binding methyltransferase superfamily. Cation-dependent O-methyltransferase family.</text>
</comment>
<sequence>MGASIDDYSLVHKNILHSEDLLKYILETSAYPREHEQLKGLREVTEKHEWSSALVPADEGLFLSMLLKLMNAKRTIEIGVYTGYSLLTTALALPEDGKITAIDVNKSFFEIGLPFIQKAGVEHKINFIESEALPVLDQMLQETKEEDLYDYAFVDADKSNYANYHERLVKLVRIGGAILYDNTLWYGSVAYPEYPGLHPEEEVARLSFRNLNTFLAADPRVEISQVSIGDGVTICRRLY</sequence>
<dbReference type="EC" id="2.1.1.336" evidence="1"/>
<dbReference type="EMBL" id="KJ584562">
    <property type="protein sequence ID" value="AIL54542.1"/>
    <property type="molecule type" value="mRNA"/>
</dbReference>
<dbReference type="SMR" id="A0A077EW86"/>
<dbReference type="GO" id="GO:0046872">
    <property type="term" value="F:metal ion binding"/>
    <property type="evidence" value="ECO:0007669"/>
    <property type="project" value="UniProtKB-KW"/>
</dbReference>
<dbReference type="GO" id="GO:0008171">
    <property type="term" value="F:O-methyltransferase activity"/>
    <property type="evidence" value="ECO:0007669"/>
    <property type="project" value="InterPro"/>
</dbReference>
<dbReference type="GO" id="GO:0008757">
    <property type="term" value="F:S-adenosylmethionine-dependent methyltransferase activity"/>
    <property type="evidence" value="ECO:0007669"/>
    <property type="project" value="TreeGrafter"/>
</dbReference>
<dbReference type="GO" id="GO:0009820">
    <property type="term" value="P:alkaloid metabolic process"/>
    <property type="evidence" value="ECO:0007669"/>
    <property type="project" value="UniProtKB-KW"/>
</dbReference>
<dbReference type="GO" id="GO:0032259">
    <property type="term" value="P:methylation"/>
    <property type="evidence" value="ECO:0007669"/>
    <property type="project" value="UniProtKB-KW"/>
</dbReference>
<dbReference type="Gene3D" id="3.40.50.150">
    <property type="entry name" value="Vaccinia Virus protein VP39"/>
    <property type="match status" value="1"/>
</dbReference>
<dbReference type="InterPro" id="IPR050362">
    <property type="entry name" value="Cation-dep_OMT"/>
</dbReference>
<dbReference type="InterPro" id="IPR029063">
    <property type="entry name" value="SAM-dependent_MTases_sf"/>
</dbReference>
<dbReference type="InterPro" id="IPR002935">
    <property type="entry name" value="SAM_O-MeTrfase"/>
</dbReference>
<dbReference type="PANTHER" id="PTHR10509">
    <property type="entry name" value="O-METHYLTRANSFERASE-RELATED"/>
    <property type="match status" value="1"/>
</dbReference>
<dbReference type="PANTHER" id="PTHR10509:SF34">
    <property type="entry name" value="TAPETUM-SPECIFIC METHYLTRANSFERASE 1"/>
    <property type="match status" value="1"/>
</dbReference>
<dbReference type="Pfam" id="PF01596">
    <property type="entry name" value="Methyltransf_3"/>
    <property type="match status" value="1"/>
</dbReference>
<dbReference type="SUPFAM" id="SSF53335">
    <property type="entry name" value="S-adenosyl-L-methionine-dependent methyltransferases"/>
    <property type="match status" value="1"/>
</dbReference>
<dbReference type="PROSITE" id="PS51682">
    <property type="entry name" value="SAM_OMT_I"/>
    <property type="match status" value="1"/>
</dbReference>
<organism>
    <name type="scientific">Narcissus aff. pseudonarcissus MK-2014</name>
    <name type="common">Daffodil</name>
    <dbReference type="NCBI Taxonomy" id="1540222"/>
    <lineage>
        <taxon>Eukaryota</taxon>
        <taxon>Viridiplantae</taxon>
        <taxon>Streptophyta</taxon>
        <taxon>Embryophyta</taxon>
        <taxon>Tracheophyta</taxon>
        <taxon>Spermatophyta</taxon>
        <taxon>Magnoliopsida</taxon>
        <taxon>Liliopsida</taxon>
        <taxon>Asparagales</taxon>
        <taxon>Amaryllidaceae</taxon>
        <taxon>Amaryllidoideae</taxon>
        <taxon>Narcissus</taxon>
    </lineage>
</organism>
<reference key="1">
    <citation type="journal article" date="2014" name="PLoS ONE">
        <title>Cloning and characterization of a norbelladine 4'-O-methyltransferase involved in the biosynthesis of the Alzheimer's drug galanthamine in Narcissus sp. aff. pseudonarcissus.</title>
        <authorList>
            <person name="Kilgore M.B."/>
            <person name="Augustin M.M."/>
            <person name="Starks C.M."/>
            <person name="O'Neil-Johnson M."/>
            <person name="May G.D."/>
            <person name="Crow J.A."/>
            <person name="Kutchan T.M."/>
        </authorList>
    </citation>
    <scope>NUCLEOTIDE SEQUENCE [MRNA]</scope>
    <source>
        <strain>cv. Carlton</strain>
        <tissue>Bulb</tissue>
    </source>
</reference>
<proteinExistence type="evidence at transcript level"/>
<name>NOMT2_NARAP</name>
<accession>A0A077EW86</accession>
<keyword id="KW-0017">Alkaloid metabolism</keyword>
<keyword id="KW-0479">Metal-binding</keyword>
<keyword id="KW-0489">Methyltransferase</keyword>
<keyword id="KW-0949">S-adenosyl-L-methionine</keyword>
<keyword id="KW-0808">Transferase</keyword>
<evidence type="ECO:0000250" key="1">
    <source>
        <dbReference type="UniProtKB" id="A0A077EWA5"/>
    </source>
</evidence>
<evidence type="ECO:0000250" key="2">
    <source>
        <dbReference type="UniProtKB" id="A0A2H5AIZ6"/>
    </source>
</evidence>
<evidence type="ECO:0000255" key="3">
    <source>
        <dbReference type="PROSITE-ProRule" id="PRU01019"/>
    </source>
</evidence>
<evidence type="ECO:0000303" key="4">
    <source>
    </source>
</evidence>
<evidence type="ECO:0000305" key="5"/>
<gene>
    <name evidence="4" type="primary">N4OMT2</name>
</gene>